<accession>A8FP19</accession>
<name>RL23_CAMJ8</name>
<keyword id="KW-0687">Ribonucleoprotein</keyword>
<keyword id="KW-0689">Ribosomal protein</keyword>
<keyword id="KW-0694">RNA-binding</keyword>
<keyword id="KW-0699">rRNA-binding</keyword>
<reference key="1">
    <citation type="journal article" date="2007" name="J. Bacteriol.">
        <title>The complete genome sequence of Campylobacter jejuni strain 81116 (NCTC11828).</title>
        <authorList>
            <person name="Pearson B.M."/>
            <person name="Gaskin D.J.H."/>
            <person name="Segers R.P.A.M."/>
            <person name="Wells J.M."/>
            <person name="Nuijten P.J.M."/>
            <person name="van Vliet A.H.M."/>
        </authorList>
    </citation>
    <scope>NUCLEOTIDE SEQUENCE [LARGE SCALE GENOMIC DNA]</scope>
    <source>
        <strain>81116 / NCTC 11828</strain>
    </source>
</reference>
<proteinExistence type="inferred from homology"/>
<feature type="chain" id="PRO_1000073441" description="Large ribosomal subunit protein uL23">
    <location>
        <begin position="1"/>
        <end position="93"/>
    </location>
</feature>
<protein>
    <recommendedName>
        <fullName evidence="1">Large ribosomal subunit protein uL23</fullName>
    </recommendedName>
    <alternativeName>
        <fullName evidence="2">50S ribosomal protein L23</fullName>
    </alternativeName>
</protein>
<dbReference type="EMBL" id="CP000814">
    <property type="protein sequence ID" value="ABV53206.1"/>
    <property type="molecule type" value="Genomic_DNA"/>
</dbReference>
<dbReference type="RefSeq" id="WP_002856384.1">
    <property type="nucleotide sequence ID" value="NC_009839.1"/>
</dbReference>
<dbReference type="SMR" id="A8FP19"/>
<dbReference type="KEGG" id="cju:C8J_1609"/>
<dbReference type="HOGENOM" id="CLU_037562_3_1_7"/>
<dbReference type="GO" id="GO:1990904">
    <property type="term" value="C:ribonucleoprotein complex"/>
    <property type="evidence" value="ECO:0007669"/>
    <property type="project" value="UniProtKB-KW"/>
</dbReference>
<dbReference type="GO" id="GO:0005840">
    <property type="term" value="C:ribosome"/>
    <property type="evidence" value="ECO:0007669"/>
    <property type="project" value="UniProtKB-KW"/>
</dbReference>
<dbReference type="GO" id="GO:0019843">
    <property type="term" value="F:rRNA binding"/>
    <property type="evidence" value="ECO:0007669"/>
    <property type="project" value="UniProtKB-UniRule"/>
</dbReference>
<dbReference type="GO" id="GO:0003735">
    <property type="term" value="F:structural constituent of ribosome"/>
    <property type="evidence" value="ECO:0007669"/>
    <property type="project" value="InterPro"/>
</dbReference>
<dbReference type="GO" id="GO:0006412">
    <property type="term" value="P:translation"/>
    <property type="evidence" value="ECO:0007669"/>
    <property type="project" value="UniProtKB-UniRule"/>
</dbReference>
<dbReference type="Gene3D" id="3.30.70.330">
    <property type="match status" value="1"/>
</dbReference>
<dbReference type="HAMAP" id="MF_01369_B">
    <property type="entry name" value="Ribosomal_uL23_B"/>
    <property type="match status" value="1"/>
</dbReference>
<dbReference type="InterPro" id="IPR012677">
    <property type="entry name" value="Nucleotide-bd_a/b_plait_sf"/>
</dbReference>
<dbReference type="InterPro" id="IPR013025">
    <property type="entry name" value="Ribosomal_uL23-like"/>
</dbReference>
<dbReference type="InterPro" id="IPR012678">
    <property type="entry name" value="Ribosomal_uL23/eL15/eS24_sf"/>
</dbReference>
<dbReference type="NCBIfam" id="NF004362">
    <property type="entry name" value="PRK05738.2-2"/>
    <property type="match status" value="1"/>
</dbReference>
<dbReference type="Pfam" id="PF00276">
    <property type="entry name" value="Ribosomal_L23"/>
    <property type="match status" value="1"/>
</dbReference>
<dbReference type="SUPFAM" id="SSF54189">
    <property type="entry name" value="Ribosomal proteins S24e, L23 and L15e"/>
    <property type="match status" value="1"/>
</dbReference>
<organism>
    <name type="scientific">Campylobacter jejuni subsp. jejuni serotype O:6 (strain 81116 / NCTC 11828)</name>
    <dbReference type="NCBI Taxonomy" id="407148"/>
    <lineage>
        <taxon>Bacteria</taxon>
        <taxon>Pseudomonadati</taxon>
        <taxon>Campylobacterota</taxon>
        <taxon>Epsilonproteobacteria</taxon>
        <taxon>Campylobacterales</taxon>
        <taxon>Campylobacteraceae</taxon>
        <taxon>Campylobacter</taxon>
    </lineage>
</organism>
<evidence type="ECO:0000255" key="1">
    <source>
        <dbReference type="HAMAP-Rule" id="MF_01369"/>
    </source>
</evidence>
<evidence type="ECO:0000305" key="2"/>
<gene>
    <name evidence="1" type="primary">rplW</name>
    <name type="ordered locus">C8J_1609</name>
</gene>
<sequence length="93" mass="10554">MADITDIKTILYTEKSLNLQEQGVVVIQTSPKMTKTGLKAVLKEYFGVTPKSINSLRMDGKVKRFRGRLGQRNDYKKFYVKLPEGVSLENTEA</sequence>
<comment type="function">
    <text evidence="1">One of the early assembly proteins it binds 23S rRNA. One of the proteins that surrounds the polypeptide exit tunnel on the outside of the ribosome. Forms the main docking site for trigger factor binding to the ribosome.</text>
</comment>
<comment type="subunit">
    <text evidence="1">Part of the 50S ribosomal subunit. Contacts protein L29, and trigger factor when it is bound to the ribosome.</text>
</comment>
<comment type="similarity">
    <text evidence="1">Belongs to the universal ribosomal protein uL23 family.</text>
</comment>